<protein>
    <recommendedName>
        <fullName evidence="2">Polymerase acidic protein</fullName>
        <ecNumber evidence="2">3.1.-.-</ecNumber>
    </recommendedName>
    <alternativeName>
        <fullName evidence="2">RNA-directed RNA polymerase subunit P2</fullName>
    </alternativeName>
</protein>
<name>PA_I60A0</name>
<accession>P21427</accession>
<accession>Q540D1</accession>
<evidence type="ECO:0000250" key="1">
    <source>
        <dbReference type="UniProtKB" id="P03433"/>
    </source>
</evidence>
<evidence type="ECO:0000255" key="2">
    <source>
        <dbReference type="HAMAP-Rule" id="MF_04063"/>
    </source>
</evidence>
<gene>
    <name evidence="2" type="primary">PA</name>
</gene>
<sequence length="716" mass="82800">MEDFVRQCFNPMIVELAEKAMKEYGEDLKIETNKFAAICTHLEVCFMYSDFHFINEQGESIIVELDDPNALLKHRFEIIEGRDRTMAWTVVNSICNTTGAEKPKFLPDLYDYKENRFIEIGVTRREVHIYYLEKANKIKSEKTHIHIFSFTGEEMATKADYTLDEESRARIKTRLFTIRQEMASRGLWDSFHQSERGEETIEERFEITGTMRRLADQSLPPNFSCLENFRAYVDGFEPNGYIEGKLSQMSKEVNAKIEPFLKTTPRPIRLPDGPPCSQRSKFLLMDALKLSIEDPSHEGEGIPLYDAIKCMRTFFGWKEPYVVKPHEKGINPNYLLSWKQVLAELQDIENEEKIPRTKNMKKTSQLKWALGENMAPEKVDFDDCRDVSDLKQYDSDEPELRSLSSWIQNEFNKACELTDSIWIELDEIGEDVAPIEHIASMRRNYFTAEVSHCRATEYIMKGVYINTALLNASCAAMDDFQLIPMISKCRTKEGRRKTNLYGFIIKGRSHLRNDTDVVNFVSMEFSLTDPRLEPHKWEKYCVLEIGDMLLRSAIGQVSRPMFLYVRTNGTSKIKMKWGMEMRRCLLQSLQQIESMIEAESSVKEKDMTKEFFKNKSETWPIGESPKGVEEGSIGKVCRTLLAKSVFNSLYASPQLEGFSAESRKLLLVVQALRDNLEPGTFDLGGLYEAIEECLINDPWVLLNASWFNSFLTHALR</sequence>
<proteinExistence type="inferred from homology"/>
<reference key="1">
    <citation type="journal article" date="1988" name="Virology">
        <title>Identification of sequence changes in the cold-adapted, live attenuated influenza vaccine strain, A/Ann Arbor/6/60 (H2N2).</title>
        <authorList>
            <person name="Cox N.J."/>
            <person name="Kitame F."/>
            <person name="Kendal A.P."/>
            <person name="Maassab H.F."/>
            <person name="Naeve C."/>
        </authorList>
    </citation>
    <scope>NUCLEOTIDE SEQUENCE [GENOMIC RNA]</scope>
</reference>
<reference key="2">
    <citation type="journal article" date="2004" name="Virology">
        <title>Genetic analysis of human H2N2 and early H3N2 influenza viruses, 1957-1972: evidence for genetic divergence and multiple reassortment events.</title>
        <authorList>
            <person name="Lindstrom S.E."/>
            <person name="Cox N.J."/>
            <person name="Klimov A."/>
        </authorList>
    </citation>
    <scope>NUCLEOTIDE SEQUENCE [GENOMIC RNA]</scope>
</reference>
<organismHost>
    <name type="scientific">Aves</name>
    <dbReference type="NCBI Taxonomy" id="8782"/>
</organismHost>
<organismHost>
    <name type="scientific">Homo sapiens</name>
    <name type="common">Human</name>
    <dbReference type="NCBI Taxonomy" id="9606"/>
</organismHost>
<organism>
    <name type="scientific">Influenza A virus (strain A/Ann Arbor/6/1960 H2N2)</name>
    <dbReference type="NCBI Taxonomy" id="384498"/>
    <lineage>
        <taxon>Viruses</taxon>
        <taxon>Riboviria</taxon>
        <taxon>Orthornavirae</taxon>
        <taxon>Negarnaviricota</taxon>
        <taxon>Polyploviricotina</taxon>
        <taxon>Insthoviricetes</taxon>
        <taxon>Articulavirales</taxon>
        <taxon>Orthomyxoviridae</taxon>
        <taxon>Alphainfluenzavirus</taxon>
        <taxon>Alphainfluenzavirus influenzae</taxon>
        <taxon>Influenza A virus</taxon>
    </lineage>
</organism>
<keyword id="KW-1157">Cap snatching</keyword>
<keyword id="KW-0255">Endonuclease</keyword>
<keyword id="KW-1262">Eukaryotic host gene expression shutoff by virus</keyword>
<keyword id="KW-1191">Eukaryotic host transcription shutoff by virus</keyword>
<keyword id="KW-1035">Host cytoplasm</keyword>
<keyword id="KW-1190">Host gene expression shutoff by virus</keyword>
<keyword id="KW-1048">Host nucleus</keyword>
<keyword id="KW-0945">Host-virus interaction</keyword>
<keyword id="KW-0378">Hydrolase</keyword>
<keyword id="KW-1104">Inhibition of host RNA polymerase II by virus</keyword>
<keyword id="KW-0464">Manganese</keyword>
<keyword id="KW-0479">Metal-binding</keyword>
<keyword id="KW-0540">Nuclease</keyword>
<keyword id="KW-0597">Phosphoprotein</keyword>
<keyword id="KW-0688">Ribosomal frameshifting</keyword>
<feature type="chain" id="PRO_0000078779" description="Polymerase acidic protein">
    <location>
        <begin position="1"/>
        <end position="716"/>
    </location>
</feature>
<feature type="short sequence motif" description="Nuclear localization signal 1 (NLS1)" evidence="1 2">
    <location>
        <begin position="124"/>
        <end position="139"/>
    </location>
</feature>
<feature type="short sequence motif" description="Nuclear localization signal 2 (NLS2)" evidence="1 2">
    <location>
        <begin position="184"/>
        <end position="247"/>
    </location>
</feature>
<feature type="binding site" evidence="2">
    <location>
        <position position="41"/>
    </location>
    <ligand>
        <name>Mn(2+)</name>
        <dbReference type="ChEBI" id="CHEBI:29035"/>
        <label>1</label>
    </ligand>
</feature>
<feature type="binding site" evidence="2">
    <location>
        <position position="80"/>
    </location>
    <ligand>
        <name>Mn(2+)</name>
        <dbReference type="ChEBI" id="CHEBI:29035"/>
        <label>2</label>
    </ligand>
</feature>
<feature type="binding site" evidence="2">
    <location>
        <position position="108"/>
    </location>
    <ligand>
        <name>Mn(2+)</name>
        <dbReference type="ChEBI" id="CHEBI:29035"/>
        <label>1</label>
    </ligand>
</feature>
<feature type="binding site" evidence="2">
    <location>
        <position position="108"/>
    </location>
    <ligand>
        <name>Mn(2+)</name>
        <dbReference type="ChEBI" id="CHEBI:29035"/>
        <label>2</label>
    </ligand>
</feature>
<feature type="binding site" evidence="2">
    <location>
        <position position="119"/>
    </location>
    <ligand>
        <name>Mn(2+)</name>
        <dbReference type="ChEBI" id="CHEBI:29035"/>
        <label>1</label>
    </ligand>
</feature>
<feature type="binding site" evidence="2">
    <location>
        <position position="120"/>
    </location>
    <ligand>
        <name>Mn(2+)</name>
        <dbReference type="ChEBI" id="CHEBI:29035"/>
        <label>1</label>
    </ligand>
</feature>
<dbReference type="EC" id="3.1.-.-" evidence="2"/>
<dbReference type="EMBL" id="M23974">
    <property type="protein sequence ID" value="AAA43616.1"/>
    <property type="molecule type" value="Genomic_RNA"/>
</dbReference>
<dbReference type="EMBL" id="AY209994">
    <property type="protein sequence ID" value="AAO46310.1"/>
    <property type="molecule type" value="Genomic_RNA"/>
</dbReference>
<dbReference type="SMR" id="P21427"/>
<dbReference type="MEROPS" id="S62.001"/>
<dbReference type="GO" id="GO:0030430">
    <property type="term" value="C:host cell cytoplasm"/>
    <property type="evidence" value="ECO:0007669"/>
    <property type="project" value="UniProtKB-SubCell"/>
</dbReference>
<dbReference type="GO" id="GO:0042025">
    <property type="term" value="C:host cell nucleus"/>
    <property type="evidence" value="ECO:0007669"/>
    <property type="project" value="UniProtKB-SubCell"/>
</dbReference>
<dbReference type="GO" id="GO:0004519">
    <property type="term" value="F:endonuclease activity"/>
    <property type="evidence" value="ECO:0007669"/>
    <property type="project" value="UniProtKB-KW"/>
</dbReference>
<dbReference type="GO" id="GO:0046872">
    <property type="term" value="F:metal ion binding"/>
    <property type="evidence" value="ECO:0007669"/>
    <property type="project" value="UniProtKB-KW"/>
</dbReference>
<dbReference type="GO" id="GO:0003723">
    <property type="term" value="F:RNA binding"/>
    <property type="evidence" value="ECO:0007669"/>
    <property type="project" value="UniProtKB-UniRule"/>
</dbReference>
<dbReference type="GO" id="GO:0075526">
    <property type="term" value="P:cap snatching"/>
    <property type="evidence" value="ECO:0007669"/>
    <property type="project" value="UniProtKB-UniRule"/>
</dbReference>
<dbReference type="GO" id="GO:0006351">
    <property type="term" value="P:DNA-templated transcription"/>
    <property type="evidence" value="ECO:0007669"/>
    <property type="project" value="UniProtKB-UniRule"/>
</dbReference>
<dbReference type="GO" id="GO:0039657">
    <property type="term" value="P:symbiont-mediated suppression of host gene expression"/>
    <property type="evidence" value="ECO:0007669"/>
    <property type="project" value="UniProtKB-KW"/>
</dbReference>
<dbReference type="GO" id="GO:0039523">
    <property type="term" value="P:symbiont-mediated suppression of host mRNA transcription via inhibition of RNA polymerase II activity"/>
    <property type="evidence" value="ECO:0007669"/>
    <property type="project" value="UniProtKB-UniRule"/>
</dbReference>
<dbReference type="GO" id="GO:0039694">
    <property type="term" value="P:viral RNA genome replication"/>
    <property type="evidence" value="ECO:0007669"/>
    <property type="project" value="InterPro"/>
</dbReference>
<dbReference type="GO" id="GO:0075523">
    <property type="term" value="P:viral translational frameshifting"/>
    <property type="evidence" value="ECO:0007669"/>
    <property type="project" value="UniProtKB-KW"/>
</dbReference>
<dbReference type="FunFam" id="3.40.91.90:FF:000001">
    <property type="entry name" value="Polymerase acidic protein"/>
    <property type="match status" value="1"/>
</dbReference>
<dbReference type="Gene3D" id="3.40.91.90">
    <property type="entry name" value="Influenza RNA-dependent RNA polymerase subunit PA, endonuclease domain"/>
    <property type="match status" value="1"/>
</dbReference>
<dbReference type="HAMAP" id="MF_04063">
    <property type="entry name" value="INFV_PA"/>
    <property type="match status" value="1"/>
</dbReference>
<dbReference type="InterPro" id="IPR037534">
    <property type="entry name" value="INFV_PA"/>
</dbReference>
<dbReference type="InterPro" id="IPR001009">
    <property type="entry name" value="PA/PA-X"/>
</dbReference>
<dbReference type="InterPro" id="IPR038372">
    <property type="entry name" value="PA/PA-X_sf"/>
</dbReference>
<dbReference type="Pfam" id="PF00603">
    <property type="entry name" value="Flu_PA"/>
    <property type="match status" value="1"/>
</dbReference>
<comment type="function">
    <text evidence="2">Plays an essential role in viral RNA transcription and replication by forming the heterotrimeric polymerase complex together with PB1 and PB2 subunits. The complex transcribes viral mRNAs by using a unique mechanism called cap-snatching. It consists in the hijacking and cleavage of host capped pre-mRNAs. These short capped RNAs are then used as primers for viral mRNAs. The PB2 subunit is responsible for the binding of the 5' cap of cellular pre-mRNAs which are subsequently cleaved after 10-13 nucleotides by the PA subunit that carries the endonuclease activity.</text>
</comment>
<comment type="cofactor">
    <cofactor evidence="2">
        <name>Mn(2+)</name>
        <dbReference type="ChEBI" id="CHEBI:29035"/>
    </cofactor>
    <text evidence="2">Binds 2 manganese ions per subunit.</text>
</comment>
<comment type="subunit">
    <text evidence="1 2">Influenza RNA polymerase is composed of three subunits: PB1, PB2 and PA. Interacts (via C-terminus) with PB1 (via N-terminus).</text>
</comment>
<comment type="subcellular location">
    <subcellularLocation>
        <location evidence="2">Host cytoplasm</location>
    </subcellularLocation>
    <subcellularLocation>
        <location evidence="2">Host nucleus</location>
    </subcellularLocation>
    <text evidence="1 2">PB1 and PA are transported in the host nucleus as a complex.</text>
</comment>
<comment type="alternative products">
    <event type="ribosomal frameshifting"/>
    <isoform>
        <id>P21427-1</id>
        <name>PA</name>
        <sequence type="displayed"/>
    </isoform>
    <isoform>
        <id>P0CK65-1</id>
        <name>PA-X</name>
        <sequence type="external"/>
    </isoform>
</comment>
<comment type="PTM">
    <text evidence="1 2">Phosphorylated on serines and threonines by host kinases, including human casein kinase II.</text>
</comment>
<comment type="similarity">
    <text evidence="2">Belongs to the influenza viruses PA family.</text>
</comment>